<feature type="chain" id="PRO_1000018816" description="Phosphoribosylaminoimidazole-succinocarboxamide synthase">
    <location>
        <begin position="1"/>
        <end position="237"/>
    </location>
</feature>
<name>PUR7_YERPN</name>
<protein>
    <recommendedName>
        <fullName evidence="1">Phosphoribosylaminoimidazole-succinocarboxamide synthase</fullName>
        <ecNumber evidence="1">6.3.2.6</ecNumber>
    </recommendedName>
    <alternativeName>
        <fullName evidence="1">SAICAR synthetase</fullName>
    </alternativeName>
</protein>
<organism>
    <name type="scientific">Yersinia pestis bv. Antiqua (strain Nepal516)</name>
    <dbReference type="NCBI Taxonomy" id="377628"/>
    <lineage>
        <taxon>Bacteria</taxon>
        <taxon>Pseudomonadati</taxon>
        <taxon>Pseudomonadota</taxon>
        <taxon>Gammaproteobacteria</taxon>
        <taxon>Enterobacterales</taxon>
        <taxon>Yersiniaceae</taxon>
        <taxon>Yersinia</taxon>
    </lineage>
</organism>
<reference key="1">
    <citation type="journal article" date="2006" name="J. Bacteriol.">
        <title>Complete genome sequence of Yersinia pestis strains Antiqua and Nepal516: evidence of gene reduction in an emerging pathogen.</title>
        <authorList>
            <person name="Chain P.S.G."/>
            <person name="Hu P."/>
            <person name="Malfatti S.A."/>
            <person name="Radnedge L."/>
            <person name="Larimer F."/>
            <person name="Vergez L.M."/>
            <person name="Worsham P."/>
            <person name="Chu M.C."/>
            <person name="Andersen G.L."/>
        </authorList>
    </citation>
    <scope>NUCLEOTIDE SEQUENCE [LARGE SCALE GENOMIC DNA]</scope>
    <source>
        <strain>Nepal516</strain>
    </source>
</reference>
<reference key="2">
    <citation type="submission" date="2009-04" db="EMBL/GenBank/DDBJ databases">
        <title>Yersinia pestis Nepal516A whole genome shotgun sequencing project.</title>
        <authorList>
            <person name="Plunkett G. III"/>
            <person name="Anderson B.D."/>
            <person name="Baumler D.J."/>
            <person name="Burland V."/>
            <person name="Cabot E.L."/>
            <person name="Glasner J.D."/>
            <person name="Mau B."/>
            <person name="Neeno-Eckwall E."/>
            <person name="Perna N.T."/>
            <person name="Munk A.C."/>
            <person name="Tapia R."/>
            <person name="Green L.D."/>
            <person name="Rogers Y.C."/>
            <person name="Detter J.C."/>
            <person name="Bruce D.C."/>
            <person name="Brettin T.S."/>
        </authorList>
    </citation>
    <scope>NUCLEOTIDE SEQUENCE [LARGE SCALE GENOMIC DNA]</scope>
    <source>
        <strain>Nepal516</strain>
    </source>
</reference>
<evidence type="ECO:0000255" key="1">
    <source>
        <dbReference type="HAMAP-Rule" id="MF_00137"/>
    </source>
</evidence>
<comment type="catalytic activity">
    <reaction evidence="1">
        <text>5-amino-1-(5-phospho-D-ribosyl)imidazole-4-carboxylate + L-aspartate + ATP = (2S)-2-[5-amino-1-(5-phospho-beta-D-ribosyl)imidazole-4-carboxamido]succinate + ADP + phosphate + 2 H(+)</text>
        <dbReference type="Rhea" id="RHEA:22628"/>
        <dbReference type="ChEBI" id="CHEBI:15378"/>
        <dbReference type="ChEBI" id="CHEBI:29991"/>
        <dbReference type="ChEBI" id="CHEBI:30616"/>
        <dbReference type="ChEBI" id="CHEBI:43474"/>
        <dbReference type="ChEBI" id="CHEBI:58443"/>
        <dbReference type="ChEBI" id="CHEBI:77657"/>
        <dbReference type="ChEBI" id="CHEBI:456216"/>
        <dbReference type="EC" id="6.3.2.6"/>
    </reaction>
</comment>
<comment type="pathway">
    <text evidence="1">Purine metabolism; IMP biosynthesis via de novo pathway; 5-amino-1-(5-phospho-D-ribosyl)imidazole-4-carboxamide from 5-amino-1-(5-phospho-D-ribosyl)imidazole-4-carboxylate: step 1/2.</text>
</comment>
<comment type="similarity">
    <text evidence="1">Belongs to the SAICAR synthetase family.</text>
</comment>
<sequence length="237" mass="27030">MQKLAELYRGKAKTVYTTENPDLLVLEFRNDTSALDGQRIEQFDRKGMVNNKFNHFIMTKLEEAGIPTQMERLLSDTEVLVKKLEMIPVECVIRNRAAGSLVKRLGIEEGLSLNPPLFDLFLKNDAMHDPMVNESYCKTFGWATEAQLARMKELSYLANDVLSKLFDDAGLILVDFKLEFGLFNGEVVLGDEFSPDGSRLWDKKTLNKMDKDRYRQSLGGLIEAYEEVAHRIGVKLD</sequence>
<proteinExistence type="inferred from homology"/>
<dbReference type="EC" id="6.3.2.6" evidence="1"/>
<dbReference type="EMBL" id="CP000305">
    <property type="protein sequence ID" value="ABG17656.1"/>
    <property type="molecule type" value="Genomic_DNA"/>
</dbReference>
<dbReference type="EMBL" id="ACNQ01000008">
    <property type="protein sequence ID" value="EEO77773.1"/>
    <property type="molecule type" value="Genomic_DNA"/>
</dbReference>
<dbReference type="RefSeq" id="WP_002208555.1">
    <property type="nucleotide sequence ID" value="NZ_ACNQ01000008.1"/>
</dbReference>
<dbReference type="SMR" id="Q1CK24"/>
<dbReference type="GeneID" id="57975643"/>
<dbReference type="KEGG" id="ypn:YPN_1326"/>
<dbReference type="HOGENOM" id="CLU_061495_2_0_6"/>
<dbReference type="UniPathway" id="UPA00074">
    <property type="reaction ID" value="UER00131"/>
</dbReference>
<dbReference type="Proteomes" id="UP000008936">
    <property type="component" value="Chromosome"/>
</dbReference>
<dbReference type="GO" id="GO:0005829">
    <property type="term" value="C:cytosol"/>
    <property type="evidence" value="ECO:0007669"/>
    <property type="project" value="TreeGrafter"/>
</dbReference>
<dbReference type="GO" id="GO:0005524">
    <property type="term" value="F:ATP binding"/>
    <property type="evidence" value="ECO:0007669"/>
    <property type="project" value="UniProtKB-KW"/>
</dbReference>
<dbReference type="GO" id="GO:0004639">
    <property type="term" value="F:phosphoribosylaminoimidazolesuccinocarboxamide synthase activity"/>
    <property type="evidence" value="ECO:0007669"/>
    <property type="project" value="UniProtKB-UniRule"/>
</dbReference>
<dbReference type="GO" id="GO:0006189">
    <property type="term" value="P:'de novo' IMP biosynthetic process"/>
    <property type="evidence" value="ECO:0007669"/>
    <property type="project" value="UniProtKB-UniRule"/>
</dbReference>
<dbReference type="GO" id="GO:0009236">
    <property type="term" value="P:cobalamin biosynthetic process"/>
    <property type="evidence" value="ECO:0007669"/>
    <property type="project" value="InterPro"/>
</dbReference>
<dbReference type="CDD" id="cd01415">
    <property type="entry name" value="SAICAR_synt_PurC"/>
    <property type="match status" value="1"/>
</dbReference>
<dbReference type="FunFam" id="3.30.200.20:FF:000086">
    <property type="entry name" value="Phosphoribosylaminoimidazole-succinocarboxamide synthase"/>
    <property type="match status" value="1"/>
</dbReference>
<dbReference type="FunFam" id="3.30.470.20:FF:000006">
    <property type="entry name" value="Phosphoribosylaminoimidazole-succinocarboxamide synthase"/>
    <property type="match status" value="1"/>
</dbReference>
<dbReference type="Gene3D" id="3.30.470.20">
    <property type="entry name" value="ATP-grasp fold, B domain"/>
    <property type="match status" value="1"/>
</dbReference>
<dbReference type="Gene3D" id="3.30.200.20">
    <property type="entry name" value="Phosphorylase Kinase, domain 1"/>
    <property type="match status" value="1"/>
</dbReference>
<dbReference type="HAMAP" id="MF_00137">
    <property type="entry name" value="SAICAR_synth"/>
    <property type="match status" value="1"/>
</dbReference>
<dbReference type="InterPro" id="IPR028923">
    <property type="entry name" value="SAICAR_synt/ADE2_N"/>
</dbReference>
<dbReference type="InterPro" id="IPR033934">
    <property type="entry name" value="SAICAR_synt_PurC"/>
</dbReference>
<dbReference type="InterPro" id="IPR001636">
    <property type="entry name" value="SAICAR_synth"/>
</dbReference>
<dbReference type="InterPro" id="IPR050089">
    <property type="entry name" value="SAICAR_synthetase"/>
</dbReference>
<dbReference type="InterPro" id="IPR018236">
    <property type="entry name" value="SAICAR_synthetase_CS"/>
</dbReference>
<dbReference type="NCBIfam" id="TIGR00081">
    <property type="entry name" value="purC"/>
    <property type="match status" value="1"/>
</dbReference>
<dbReference type="PANTHER" id="PTHR43599">
    <property type="entry name" value="MULTIFUNCTIONAL PROTEIN ADE2"/>
    <property type="match status" value="1"/>
</dbReference>
<dbReference type="PANTHER" id="PTHR43599:SF3">
    <property type="entry name" value="SI:DKEY-6E2.2"/>
    <property type="match status" value="1"/>
</dbReference>
<dbReference type="Pfam" id="PF01259">
    <property type="entry name" value="SAICAR_synt"/>
    <property type="match status" value="1"/>
</dbReference>
<dbReference type="SUPFAM" id="SSF56104">
    <property type="entry name" value="SAICAR synthase-like"/>
    <property type="match status" value="1"/>
</dbReference>
<dbReference type="PROSITE" id="PS01057">
    <property type="entry name" value="SAICAR_SYNTHETASE_1"/>
    <property type="match status" value="1"/>
</dbReference>
<dbReference type="PROSITE" id="PS01058">
    <property type="entry name" value="SAICAR_SYNTHETASE_2"/>
    <property type="match status" value="1"/>
</dbReference>
<gene>
    <name evidence="1" type="primary">purC</name>
    <name type="ordered locus">YPN_1326</name>
    <name type="ORF">YP516_1460</name>
</gene>
<accession>Q1CK24</accession>
<accession>C4GRT2</accession>
<keyword id="KW-0067">ATP-binding</keyword>
<keyword id="KW-0436">Ligase</keyword>
<keyword id="KW-0547">Nucleotide-binding</keyword>
<keyword id="KW-0658">Purine biosynthesis</keyword>